<proteinExistence type="evidence at protein level"/>
<keyword id="KW-0067">ATP-binding</keyword>
<keyword id="KW-0997">Cell inner membrane</keyword>
<keyword id="KW-1003">Cell membrane</keyword>
<keyword id="KW-0472">Membrane</keyword>
<keyword id="KW-0547">Nucleotide-binding</keyword>
<keyword id="KW-0614">Plasmid</keyword>
<keyword id="KW-1185">Reference proteome</keyword>
<keyword id="KW-0812">Transmembrane</keyword>
<keyword id="KW-1133">Transmembrane helix</keyword>
<keyword id="KW-0813">Transport</keyword>
<comment type="function">
    <text evidence="3">Mediates secretion of glycanase ExsH.</text>
</comment>
<comment type="subunit">
    <text evidence="5">Part of a type I secretion system composed of PrsD and PrsE.</text>
</comment>
<comment type="subcellular location">
    <subcellularLocation>
        <location evidence="4">Cell inner membrane</location>
        <topology evidence="2">Multi-pass membrane protein</topology>
    </subcellularLocation>
</comment>
<comment type="similarity">
    <text evidence="4">Belongs to the ABC transporter superfamily.</text>
</comment>
<comment type="sequence caution" evidence="4">
    <conflict type="erroneous initiation">
        <sequence resource="EMBL-CDS" id="CAC49692"/>
    </conflict>
    <text>Extended N-terminus.</text>
</comment>
<geneLocation type="plasmid">
    <name>pSymB</name>
    <name>megaplasmid 2</name>
</geneLocation>
<organism>
    <name type="scientific">Rhizobium meliloti (strain 1021)</name>
    <name type="common">Ensifer meliloti</name>
    <name type="synonym">Sinorhizobium meliloti</name>
    <dbReference type="NCBI Taxonomy" id="266834"/>
    <lineage>
        <taxon>Bacteria</taxon>
        <taxon>Pseudomonadati</taxon>
        <taxon>Pseudomonadota</taxon>
        <taxon>Alphaproteobacteria</taxon>
        <taxon>Hyphomicrobiales</taxon>
        <taxon>Rhizobiaceae</taxon>
        <taxon>Sinorhizobium/Ensifer group</taxon>
        <taxon>Sinorhizobium</taxon>
    </lineage>
</organism>
<feature type="chain" id="PRO_0000415267" description="Type I secretion system ATP-binding protein PrsD">
    <location>
        <begin position="1"/>
        <end position="582"/>
    </location>
</feature>
<feature type="transmembrane region" description="Helical" evidence="2">
    <location>
        <begin position="22"/>
        <end position="42"/>
    </location>
</feature>
<feature type="transmembrane region" description="Helical" evidence="2">
    <location>
        <begin position="59"/>
        <end position="79"/>
    </location>
</feature>
<feature type="transmembrane region" description="Helical" evidence="2">
    <location>
        <begin position="148"/>
        <end position="168"/>
    </location>
</feature>
<feature type="domain" description="ABC transmembrane type-1" evidence="2">
    <location>
        <begin position="22"/>
        <end position="301"/>
    </location>
</feature>
<feature type="domain" description="ABC transporter" evidence="1">
    <location>
        <begin position="332"/>
        <end position="568"/>
    </location>
</feature>
<feature type="binding site" evidence="1">
    <location>
        <begin position="366"/>
        <end position="373"/>
    </location>
    <ligand>
        <name>ATP</name>
        <dbReference type="ChEBI" id="CHEBI:30616"/>
    </ligand>
</feature>
<gene>
    <name type="primary">prsD</name>
    <name type="ordered locus">RB1292</name>
    <name type="ORF">SM_b21466</name>
</gene>
<sequence>MATSKGRNADPAAALRDCRAAFIGVGVASALVNLLYLTGSFFMLEVYDRILPSRSIPSLIALSLLALLLYAFQGAFELIRGRMLVRIAGALDESLNGRIYRAIVKAPLKLRMQGDGLQALRDFDQVRSFLSGVGPAALFDLPWLPFYIAICFLFHPVIGLIAIIGGLILTLLTYLTNRGTQAPAKKASEAGGLRNVFAQASQRNAEVVHAMGMSARLTALWERRNTEFRDENRRTSDIGNGYGALSKVFRMALQSGVLAAGAVLVIRGEASPGIIIAGSILTARALAPVELAIGNWRGLVAARQSWQRLKELLNALPEADAPLQLPDPHERLTVEGLASGPPAAQRLVVSDVNFTVRAGGAVGVIGPSASGKSSLARAILGIWPAYRGSVRLDGAALDQWDSDALGKHVGYLPQDVELFAGTIAQNICRFAEDATSEAIVAAAKAARVNDLILRLPNGYDTEIGDGGMTLSAGQRQRVALARALYGDPFLVVLDEPNSNLDAEGEQALSEAIMSVRSRGGIVIVVAHRPSALASVDLVLMMNEGRMQAFGPKEQVLGQVLRPQQVERQNALKVVAEGQEAKQ</sequence>
<accession>Q7ANN4</accession>
<accession>O33678</accession>
<dbReference type="EMBL" id="U89163">
    <property type="protein sequence ID" value="AAB64091.1"/>
    <property type="molecule type" value="Genomic_DNA"/>
</dbReference>
<dbReference type="EMBL" id="AL591985">
    <property type="protein sequence ID" value="CAC49692.2"/>
    <property type="status" value="ALT_INIT"/>
    <property type="molecule type" value="Genomic_DNA"/>
</dbReference>
<dbReference type="PIR" id="D96003">
    <property type="entry name" value="D96003"/>
</dbReference>
<dbReference type="RefSeq" id="NP_437832.2">
    <property type="nucleotide sequence ID" value="NC_003078.1"/>
</dbReference>
<dbReference type="RefSeq" id="WP_027991853.1">
    <property type="nucleotide sequence ID" value="NC_003078.1"/>
</dbReference>
<dbReference type="SMR" id="Q7ANN4"/>
<dbReference type="EnsemblBacteria" id="CAC49692">
    <property type="protein sequence ID" value="CAC49692"/>
    <property type="gene ID" value="SM_b21466"/>
</dbReference>
<dbReference type="KEGG" id="sme:SM_b21466"/>
<dbReference type="PATRIC" id="fig|266834.11.peg.6215"/>
<dbReference type="eggNOG" id="COG4618">
    <property type="taxonomic scope" value="Bacteria"/>
</dbReference>
<dbReference type="HOGENOM" id="CLU_000604_95_6_5"/>
<dbReference type="OrthoDB" id="9808328at2"/>
<dbReference type="Proteomes" id="UP000001976">
    <property type="component" value="Plasmid pSymB"/>
</dbReference>
<dbReference type="GO" id="GO:0005886">
    <property type="term" value="C:plasma membrane"/>
    <property type="evidence" value="ECO:0007669"/>
    <property type="project" value="UniProtKB-SubCell"/>
</dbReference>
<dbReference type="GO" id="GO:0030256">
    <property type="term" value="C:type I protein secretion system complex"/>
    <property type="evidence" value="ECO:0007669"/>
    <property type="project" value="InterPro"/>
</dbReference>
<dbReference type="GO" id="GO:0140359">
    <property type="term" value="F:ABC-type transporter activity"/>
    <property type="evidence" value="ECO:0007669"/>
    <property type="project" value="InterPro"/>
</dbReference>
<dbReference type="GO" id="GO:0005524">
    <property type="term" value="F:ATP binding"/>
    <property type="evidence" value="ECO:0007669"/>
    <property type="project" value="UniProtKB-KW"/>
</dbReference>
<dbReference type="GO" id="GO:0016887">
    <property type="term" value="F:ATP hydrolysis activity"/>
    <property type="evidence" value="ECO:0007669"/>
    <property type="project" value="InterPro"/>
</dbReference>
<dbReference type="GO" id="GO:0034040">
    <property type="term" value="F:ATPase-coupled lipid transmembrane transporter activity"/>
    <property type="evidence" value="ECO:0007669"/>
    <property type="project" value="TreeGrafter"/>
</dbReference>
<dbReference type="GO" id="GO:0030253">
    <property type="term" value="P:protein secretion by the type I secretion system"/>
    <property type="evidence" value="ECO:0007669"/>
    <property type="project" value="InterPro"/>
</dbReference>
<dbReference type="CDD" id="cd03246">
    <property type="entry name" value="ABCC_Protease_Secretion"/>
    <property type="match status" value="1"/>
</dbReference>
<dbReference type="FunFam" id="3.40.50.300:FF:001444">
    <property type="entry name" value="ABC transporter ATP-binding protein"/>
    <property type="match status" value="1"/>
</dbReference>
<dbReference type="Gene3D" id="1.20.1560.10">
    <property type="entry name" value="ABC transporter type 1, transmembrane domain"/>
    <property type="match status" value="1"/>
</dbReference>
<dbReference type="Gene3D" id="3.40.50.300">
    <property type="entry name" value="P-loop containing nucleotide triphosphate hydrolases"/>
    <property type="match status" value="1"/>
</dbReference>
<dbReference type="InterPro" id="IPR003593">
    <property type="entry name" value="AAA+_ATPase"/>
</dbReference>
<dbReference type="InterPro" id="IPR011527">
    <property type="entry name" value="ABC1_TM_dom"/>
</dbReference>
<dbReference type="InterPro" id="IPR036640">
    <property type="entry name" value="ABC1_TM_sf"/>
</dbReference>
<dbReference type="InterPro" id="IPR003439">
    <property type="entry name" value="ABC_transporter-like_ATP-bd"/>
</dbReference>
<dbReference type="InterPro" id="IPR017871">
    <property type="entry name" value="ABC_transporter-like_CS"/>
</dbReference>
<dbReference type="InterPro" id="IPR010128">
    <property type="entry name" value="ATPase_T1SS_PrtD-like"/>
</dbReference>
<dbReference type="InterPro" id="IPR027417">
    <property type="entry name" value="P-loop_NTPase"/>
</dbReference>
<dbReference type="InterPro" id="IPR039421">
    <property type="entry name" value="Type_1_exporter"/>
</dbReference>
<dbReference type="NCBIfam" id="TIGR01842">
    <property type="entry name" value="type_I_sec_PrtD"/>
    <property type="match status" value="1"/>
</dbReference>
<dbReference type="PANTHER" id="PTHR24221:SF248">
    <property type="entry name" value="ABC TRANSPORTER TRANSMEMBRANE REGION"/>
    <property type="match status" value="1"/>
</dbReference>
<dbReference type="PANTHER" id="PTHR24221">
    <property type="entry name" value="ATP-BINDING CASSETTE SUB-FAMILY B"/>
    <property type="match status" value="1"/>
</dbReference>
<dbReference type="Pfam" id="PF00664">
    <property type="entry name" value="ABC_membrane"/>
    <property type="match status" value="1"/>
</dbReference>
<dbReference type="Pfam" id="PF00005">
    <property type="entry name" value="ABC_tran"/>
    <property type="match status" value="1"/>
</dbReference>
<dbReference type="SMART" id="SM00382">
    <property type="entry name" value="AAA"/>
    <property type="match status" value="1"/>
</dbReference>
<dbReference type="SUPFAM" id="SSF90123">
    <property type="entry name" value="ABC transporter transmembrane region"/>
    <property type="match status" value="1"/>
</dbReference>
<dbReference type="SUPFAM" id="SSF52540">
    <property type="entry name" value="P-loop containing nucleoside triphosphate hydrolases"/>
    <property type="match status" value="1"/>
</dbReference>
<dbReference type="PROSITE" id="PS50929">
    <property type="entry name" value="ABC_TM1F"/>
    <property type="match status" value="1"/>
</dbReference>
<dbReference type="PROSITE" id="PS00211">
    <property type="entry name" value="ABC_TRANSPORTER_1"/>
    <property type="match status" value="1"/>
</dbReference>
<dbReference type="PROSITE" id="PS50893">
    <property type="entry name" value="ABC_TRANSPORTER_2"/>
    <property type="match status" value="1"/>
</dbReference>
<reference key="1">
    <citation type="journal article" date="1997" name="Mol. Microbiol.">
        <title>The Rhizobium meliloti exoK gene and prsD/prsE/exsH genes encode components of independent degradative pathways which contribute to production of low-molecular-weight succinoglycan.</title>
        <authorList>
            <person name="York G.M."/>
            <person name="Walker G.C."/>
        </authorList>
    </citation>
    <scope>NUCLEOTIDE SEQUENCE [GENOMIC DNA]</scope>
    <scope>FUNCTION</scope>
    <scope>SUBUNIT</scope>
    <source>
        <strain>1021</strain>
    </source>
</reference>
<reference key="2">
    <citation type="journal article" date="2001" name="Proc. Natl. Acad. Sci. U.S.A.">
        <title>The complete sequence of the 1,683-kb pSymB megaplasmid from the N2-fixing endosymbiont Sinorhizobium meliloti.</title>
        <authorList>
            <person name="Finan T.M."/>
            <person name="Weidner S."/>
            <person name="Wong K."/>
            <person name="Buhrmester J."/>
            <person name="Chain P."/>
            <person name="Vorhoelter F.J."/>
            <person name="Hernandez-Lucas I."/>
            <person name="Becker A."/>
            <person name="Cowie A."/>
            <person name="Gouzy J."/>
            <person name="Golding B."/>
            <person name="Puehler A."/>
        </authorList>
    </citation>
    <scope>NUCLEOTIDE SEQUENCE [LARGE SCALE GENOMIC DNA]</scope>
    <source>
        <strain>1021</strain>
    </source>
</reference>
<reference key="3">
    <citation type="journal article" date="2001" name="Science">
        <title>The composite genome of the legume symbiont Sinorhizobium meliloti.</title>
        <authorList>
            <person name="Galibert F."/>
            <person name="Finan T.M."/>
            <person name="Long S.R."/>
            <person name="Puehler A."/>
            <person name="Abola P."/>
            <person name="Ampe F."/>
            <person name="Barloy-Hubler F."/>
            <person name="Barnett M.J."/>
            <person name="Becker A."/>
            <person name="Boistard P."/>
            <person name="Bothe G."/>
            <person name="Boutry M."/>
            <person name="Bowser L."/>
            <person name="Buhrmester J."/>
            <person name="Cadieu E."/>
            <person name="Capela D."/>
            <person name="Chain P."/>
            <person name="Cowie A."/>
            <person name="Davis R.W."/>
            <person name="Dreano S."/>
            <person name="Federspiel N.A."/>
            <person name="Fisher R.F."/>
            <person name="Gloux S."/>
            <person name="Godrie T."/>
            <person name="Goffeau A."/>
            <person name="Golding B."/>
            <person name="Gouzy J."/>
            <person name="Gurjal M."/>
            <person name="Hernandez-Lucas I."/>
            <person name="Hong A."/>
            <person name="Huizar L."/>
            <person name="Hyman R.W."/>
            <person name="Jones T."/>
            <person name="Kahn D."/>
            <person name="Kahn M.L."/>
            <person name="Kalman S."/>
            <person name="Keating D.H."/>
            <person name="Kiss E."/>
            <person name="Komp C."/>
            <person name="Lelaure V."/>
            <person name="Masuy D."/>
            <person name="Palm C."/>
            <person name="Peck M.C."/>
            <person name="Pohl T.M."/>
            <person name="Portetelle D."/>
            <person name="Purnelle B."/>
            <person name="Ramsperger U."/>
            <person name="Surzycki R."/>
            <person name="Thebault P."/>
            <person name="Vandenbol M."/>
            <person name="Vorhoelter F.J."/>
            <person name="Weidner S."/>
            <person name="Wells D.H."/>
            <person name="Wong K."/>
            <person name="Yeh K.-C."/>
            <person name="Batut J."/>
        </authorList>
    </citation>
    <scope>NUCLEOTIDE SEQUENCE [LARGE SCALE GENOMIC DNA]</scope>
    <source>
        <strain>1021</strain>
    </source>
</reference>
<protein>
    <recommendedName>
        <fullName>Type I secretion system ATP-binding protein PrsD</fullName>
    </recommendedName>
</protein>
<evidence type="ECO:0000255" key="1">
    <source>
        <dbReference type="PROSITE-ProRule" id="PRU00434"/>
    </source>
</evidence>
<evidence type="ECO:0000255" key="2">
    <source>
        <dbReference type="PROSITE-ProRule" id="PRU00441"/>
    </source>
</evidence>
<evidence type="ECO:0000269" key="3">
    <source>
    </source>
</evidence>
<evidence type="ECO:0000305" key="4"/>
<evidence type="ECO:0000305" key="5">
    <source>
    </source>
</evidence>
<name>PRSD_RHIME</name>